<feature type="chain" id="PRO_1000072919" description="23S rRNA (uracil(747)-C(5))-methyltransferase RlmC">
    <location>
        <begin position="1"/>
        <end position="375"/>
    </location>
</feature>
<feature type="active site" description="Nucleophile" evidence="1">
    <location>
        <position position="334"/>
    </location>
</feature>
<feature type="binding site" evidence="1">
    <location>
        <position position="3"/>
    </location>
    <ligand>
        <name>[4Fe-4S] cluster</name>
        <dbReference type="ChEBI" id="CHEBI:49883"/>
    </ligand>
</feature>
<feature type="binding site" evidence="1">
    <location>
        <position position="11"/>
    </location>
    <ligand>
        <name>[4Fe-4S] cluster</name>
        <dbReference type="ChEBI" id="CHEBI:49883"/>
    </ligand>
</feature>
<feature type="binding site" evidence="1">
    <location>
        <position position="14"/>
    </location>
    <ligand>
        <name>[4Fe-4S] cluster</name>
        <dbReference type="ChEBI" id="CHEBI:49883"/>
    </ligand>
</feature>
<feature type="binding site" evidence="1">
    <location>
        <position position="87"/>
    </location>
    <ligand>
        <name>[4Fe-4S] cluster</name>
        <dbReference type="ChEBI" id="CHEBI:49883"/>
    </ligand>
</feature>
<feature type="binding site" evidence="1">
    <location>
        <position position="212"/>
    </location>
    <ligand>
        <name>S-adenosyl-L-methionine</name>
        <dbReference type="ChEBI" id="CHEBI:59789"/>
    </ligand>
</feature>
<feature type="binding site" evidence="1">
    <location>
        <position position="241"/>
    </location>
    <ligand>
        <name>S-adenosyl-L-methionine</name>
        <dbReference type="ChEBI" id="CHEBI:59789"/>
    </ligand>
</feature>
<feature type="binding site" evidence="1">
    <location>
        <position position="262"/>
    </location>
    <ligand>
        <name>S-adenosyl-L-methionine</name>
        <dbReference type="ChEBI" id="CHEBI:59789"/>
    </ligand>
</feature>
<feature type="binding site" evidence="1">
    <location>
        <position position="307"/>
    </location>
    <ligand>
        <name>S-adenosyl-L-methionine</name>
        <dbReference type="ChEBI" id="CHEBI:59789"/>
    </ligand>
</feature>
<evidence type="ECO:0000255" key="1">
    <source>
        <dbReference type="HAMAP-Rule" id="MF_01012"/>
    </source>
</evidence>
<protein>
    <recommendedName>
        <fullName evidence="1">23S rRNA (uracil(747)-C(5))-methyltransferase RlmC</fullName>
        <ecNumber evidence="1">2.1.1.189</ecNumber>
    </recommendedName>
    <alternativeName>
        <fullName evidence="1">23S rRNA(m5U747)-methyltransferase</fullName>
    </alternativeName>
</protein>
<comment type="function">
    <text evidence="1">Catalyzes the formation of 5-methyl-uridine at position 747 (m5U747) in 23S rRNA.</text>
</comment>
<comment type="catalytic activity">
    <reaction evidence="1">
        <text>uridine(747) in 23S rRNA + S-adenosyl-L-methionine = 5-methyluridine(747) in 23S rRNA + S-adenosyl-L-homocysteine + H(+)</text>
        <dbReference type="Rhea" id="RHEA:42628"/>
        <dbReference type="Rhea" id="RHEA-COMP:10154"/>
        <dbReference type="Rhea" id="RHEA-COMP:10155"/>
        <dbReference type="ChEBI" id="CHEBI:15378"/>
        <dbReference type="ChEBI" id="CHEBI:57856"/>
        <dbReference type="ChEBI" id="CHEBI:59789"/>
        <dbReference type="ChEBI" id="CHEBI:65315"/>
        <dbReference type="ChEBI" id="CHEBI:74447"/>
        <dbReference type="EC" id="2.1.1.189"/>
    </reaction>
</comment>
<comment type="similarity">
    <text evidence="1">Belongs to the class I-like SAM-binding methyltransferase superfamily. RNA M5U methyltransferase family. RlmC subfamily.</text>
</comment>
<gene>
    <name evidence="1" type="primary">rlmC</name>
    <name type="synonym">rumB</name>
    <name type="ordered locus">VC0395_0309</name>
    <name type="ordered locus">VC395_A0954</name>
</gene>
<keyword id="KW-0004">4Fe-4S</keyword>
<keyword id="KW-0408">Iron</keyword>
<keyword id="KW-0411">Iron-sulfur</keyword>
<keyword id="KW-0479">Metal-binding</keyword>
<keyword id="KW-0489">Methyltransferase</keyword>
<keyword id="KW-0698">rRNA processing</keyword>
<keyword id="KW-0949">S-adenosyl-L-methionine</keyword>
<keyword id="KW-0808">Transferase</keyword>
<dbReference type="EC" id="2.1.1.189" evidence="1"/>
<dbReference type="EMBL" id="CP000626">
    <property type="protein sequence ID" value="ABQ18716.1"/>
    <property type="molecule type" value="Genomic_DNA"/>
</dbReference>
<dbReference type="EMBL" id="CP001236">
    <property type="protein sequence ID" value="ACP11785.1"/>
    <property type="molecule type" value="Genomic_DNA"/>
</dbReference>
<dbReference type="RefSeq" id="WP_001149825.1">
    <property type="nucleotide sequence ID" value="NZ_JAACZH010000003.1"/>
</dbReference>
<dbReference type="SMR" id="A5F0U5"/>
<dbReference type="KEGG" id="vco:VC0395_0309"/>
<dbReference type="KEGG" id="vcr:VC395_A0954"/>
<dbReference type="PATRIC" id="fig|345073.21.peg.3681"/>
<dbReference type="eggNOG" id="COG2265">
    <property type="taxonomic scope" value="Bacteria"/>
</dbReference>
<dbReference type="HOGENOM" id="CLU_014689_0_0_6"/>
<dbReference type="OrthoDB" id="9804590at2"/>
<dbReference type="Proteomes" id="UP000000249">
    <property type="component" value="Chromosome 1"/>
</dbReference>
<dbReference type="GO" id="GO:0051539">
    <property type="term" value="F:4 iron, 4 sulfur cluster binding"/>
    <property type="evidence" value="ECO:0007669"/>
    <property type="project" value="UniProtKB-KW"/>
</dbReference>
<dbReference type="GO" id="GO:0005506">
    <property type="term" value="F:iron ion binding"/>
    <property type="evidence" value="ECO:0007669"/>
    <property type="project" value="UniProtKB-UniRule"/>
</dbReference>
<dbReference type="GO" id="GO:0070041">
    <property type="term" value="F:rRNA (uridine-C5-)-methyltransferase activity"/>
    <property type="evidence" value="ECO:0007669"/>
    <property type="project" value="UniProtKB-UniRule"/>
</dbReference>
<dbReference type="GO" id="GO:0070475">
    <property type="term" value="P:rRNA base methylation"/>
    <property type="evidence" value="ECO:0007669"/>
    <property type="project" value="TreeGrafter"/>
</dbReference>
<dbReference type="CDD" id="cd02440">
    <property type="entry name" value="AdoMet_MTases"/>
    <property type="match status" value="1"/>
</dbReference>
<dbReference type="Gene3D" id="2.40.50.1070">
    <property type="match status" value="1"/>
</dbReference>
<dbReference type="Gene3D" id="3.40.50.150">
    <property type="entry name" value="Vaccinia Virus protein VP39"/>
    <property type="match status" value="1"/>
</dbReference>
<dbReference type="HAMAP" id="MF_01012">
    <property type="entry name" value="23SrRNA_methyltr_RlmC"/>
    <property type="match status" value="1"/>
</dbReference>
<dbReference type="InterPro" id="IPR011825">
    <property type="entry name" value="23SrRNA_MeTrfase_RlmC"/>
</dbReference>
<dbReference type="InterPro" id="IPR030390">
    <property type="entry name" value="MeTrfase_TrmA_AS"/>
</dbReference>
<dbReference type="InterPro" id="IPR029063">
    <property type="entry name" value="SAM-dependent_MTases_sf"/>
</dbReference>
<dbReference type="InterPro" id="IPR010280">
    <property type="entry name" value="U5_MeTrfase_fam"/>
</dbReference>
<dbReference type="NCBIfam" id="TIGR02085">
    <property type="entry name" value="meth_trns_rumB"/>
    <property type="match status" value="1"/>
</dbReference>
<dbReference type="PANTHER" id="PTHR11061">
    <property type="entry name" value="RNA M5U METHYLTRANSFERASE"/>
    <property type="match status" value="1"/>
</dbReference>
<dbReference type="PANTHER" id="PTHR11061:SF30">
    <property type="entry name" value="TRNA (URACIL(54)-C(5))-METHYLTRANSFERASE"/>
    <property type="match status" value="1"/>
</dbReference>
<dbReference type="Pfam" id="PF05958">
    <property type="entry name" value="tRNA_U5-meth_tr"/>
    <property type="match status" value="1"/>
</dbReference>
<dbReference type="SUPFAM" id="SSF53335">
    <property type="entry name" value="S-adenosyl-L-methionine-dependent methyltransferases"/>
    <property type="match status" value="1"/>
</dbReference>
<dbReference type="PROSITE" id="PS51687">
    <property type="entry name" value="SAM_MT_RNA_M5U"/>
    <property type="match status" value="1"/>
</dbReference>
<dbReference type="PROSITE" id="PS01230">
    <property type="entry name" value="TRMA_1"/>
    <property type="match status" value="1"/>
</dbReference>
<name>RLMC_VIBC3</name>
<reference key="1">
    <citation type="submission" date="2007-03" db="EMBL/GenBank/DDBJ databases">
        <authorList>
            <person name="Heidelberg J."/>
        </authorList>
    </citation>
    <scope>NUCLEOTIDE SEQUENCE [LARGE SCALE GENOMIC DNA]</scope>
    <source>
        <strain>ATCC 39541 / Classical Ogawa 395 / O395</strain>
    </source>
</reference>
<reference key="2">
    <citation type="journal article" date="2008" name="PLoS ONE">
        <title>A recalibrated molecular clock and independent origins for the cholera pandemic clones.</title>
        <authorList>
            <person name="Feng L."/>
            <person name="Reeves P.R."/>
            <person name="Lan R."/>
            <person name="Ren Y."/>
            <person name="Gao C."/>
            <person name="Zhou Z."/>
            <person name="Ren Y."/>
            <person name="Cheng J."/>
            <person name="Wang W."/>
            <person name="Wang J."/>
            <person name="Qian W."/>
            <person name="Li D."/>
            <person name="Wang L."/>
        </authorList>
    </citation>
    <scope>NUCLEOTIDE SEQUENCE [LARGE SCALE GENOMIC DNA]</scope>
    <source>
        <strain>ATCC 39541 / Classical Ogawa 395 / O395</strain>
    </source>
</reference>
<accession>A5F0U5</accession>
<accession>C3M6M2</accession>
<organism>
    <name type="scientific">Vibrio cholerae serotype O1 (strain ATCC 39541 / Classical Ogawa 395 / O395)</name>
    <dbReference type="NCBI Taxonomy" id="345073"/>
    <lineage>
        <taxon>Bacteria</taxon>
        <taxon>Pseudomonadati</taxon>
        <taxon>Pseudomonadota</taxon>
        <taxon>Gammaproteobacteria</taxon>
        <taxon>Vibrionales</taxon>
        <taxon>Vibrionaceae</taxon>
        <taxon>Vibrio</taxon>
    </lineage>
</organism>
<proteinExistence type="inferred from homology"/>
<sequence>MQCEFFIQKRCTSCHQCAQPYSQQVENKDQQLRELIAPAMDVQWLPPVTSADTAFRNKAKMVVLGAAHAPILGIEDAQGQPLSLVTCPLYPQPMQELLAYLENWIRIAGIPPYNKLKKKGELKFILLTRSENSGQFMLRFVARSHAVLERIERNLPTLIAAFPTIEVVSVNIQPVHMARLEGEEEIFLTETQSLLEQFNDVPMVIRPKSFFQTNPQVAEQLYATARAWVREIAPTQMWDLFCGVGGFALHCAAPNTAVTGIEIEPEAIASAQRSAQMMGIDNLSFAALDSAKFSQSQMSAPELVLVNPPRRGLGSELTAQLEALAPQHILYSSCNPQTMVKDIAELASYQMSRVQWFDMFPHTDHAEVLTLLVRK</sequence>